<evidence type="ECO:0000255" key="1"/>
<evidence type="ECO:0000256" key="2">
    <source>
        <dbReference type="SAM" id="MobiDB-lite"/>
    </source>
</evidence>
<keyword id="KW-0175">Coiled coil</keyword>
<keyword id="KW-0903">Direct protein sequencing</keyword>
<keyword id="KW-1185">Reference proteome</keyword>
<reference key="1">
    <citation type="journal article" date="2004" name="Genome Res.">
        <title>The status, quality, and expansion of the NIH full-length cDNA project: the Mammalian Gene Collection (MGC).</title>
        <authorList>
            <consortium name="The MGC Project Team"/>
        </authorList>
    </citation>
    <scope>NUCLEOTIDE SEQUENCE [LARGE SCALE MRNA]</scope>
    <source>
        <tissue>Testis</tissue>
    </source>
</reference>
<reference key="2">
    <citation type="submission" date="2007-09" db="UniProtKB">
        <authorList>
            <person name="Lubec G."/>
            <person name="Kang S.U."/>
            <person name="Lubec S."/>
        </authorList>
    </citation>
    <scope>PROTEIN SEQUENCE OF 288-295; 365-370 AND 756-775</scope>
    <scope>IDENTIFICATION BY MASS SPECTROMETRY</scope>
    <source>
        <strain>Sprague-Dawley</strain>
        <tissue>Brain</tissue>
    </source>
</reference>
<proteinExistence type="evidence at protein level"/>
<accession>Q5PQJ9</accession>
<feature type="chain" id="PRO_0000259928" description="Coiled-coil domain-containing protein 175">
    <location>
        <begin position="1"/>
        <end position="817"/>
    </location>
</feature>
<feature type="region of interest" description="Disordered" evidence="2">
    <location>
        <begin position="761"/>
        <end position="817"/>
    </location>
</feature>
<feature type="coiled-coil region" evidence="1">
    <location>
        <begin position="130"/>
        <end position="166"/>
    </location>
</feature>
<feature type="coiled-coil region" evidence="1">
    <location>
        <begin position="217"/>
        <end position="594"/>
    </location>
</feature>
<feature type="compositionally biased region" description="Basic and acidic residues" evidence="2">
    <location>
        <begin position="769"/>
        <end position="786"/>
    </location>
</feature>
<feature type="compositionally biased region" description="Basic residues" evidence="2">
    <location>
        <begin position="804"/>
        <end position="817"/>
    </location>
</feature>
<dbReference type="EMBL" id="BC087160">
    <property type="protein sequence ID" value="AAH87160.2"/>
    <property type="molecule type" value="mRNA"/>
</dbReference>
<dbReference type="RefSeq" id="NP_001157872.1">
    <property type="nucleotide sequence ID" value="NM_001164400.1"/>
</dbReference>
<dbReference type="SMR" id="Q5PQJ9"/>
<dbReference type="FunCoup" id="Q5PQJ9">
    <property type="interactions" value="3"/>
</dbReference>
<dbReference type="STRING" id="10116.ENSRNOP00000006346"/>
<dbReference type="PhosphoSitePlus" id="Q5PQJ9"/>
<dbReference type="PaxDb" id="10116-ENSRNOP00000006346"/>
<dbReference type="Ensembl" id="ENSRNOT00000006346.8">
    <property type="protein sequence ID" value="ENSRNOP00000006346.5"/>
    <property type="gene ID" value="ENSRNOG00000004774.8"/>
</dbReference>
<dbReference type="GeneID" id="500668"/>
<dbReference type="KEGG" id="rno:500668"/>
<dbReference type="UCSC" id="RGD:1560894">
    <property type="organism name" value="rat"/>
</dbReference>
<dbReference type="AGR" id="RGD:1560894"/>
<dbReference type="CTD" id="729665"/>
<dbReference type="RGD" id="1560894">
    <property type="gene designation" value="Ccdc175"/>
</dbReference>
<dbReference type="eggNOG" id="ENOG502RXX0">
    <property type="taxonomic scope" value="Eukaryota"/>
</dbReference>
<dbReference type="GeneTree" id="ENSGT00390000001277"/>
<dbReference type="HOGENOM" id="CLU_345791_0_0_1"/>
<dbReference type="InParanoid" id="Q5PQJ9"/>
<dbReference type="OMA" id="VFMQKRK"/>
<dbReference type="OrthoDB" id="10031759at2759"/>
<dbReference type="PhylomeDB" id="Q5PQJ9"/>
<dbReference type="TreeFam" id="TF351236"/>
<dbReference type="PRO" id="PR:Q5PQJ9"/>
<dbReference type="Proteomes" id="UP000002494">
    <property type="component" value="Chromosome 6"/>
</dbReference>
<dbReference type="Bgee" id="ENSRNOG00000004774">
    <property type="expression patterns" value="Expressed in testis and 19 other cell types or tissues"/>
</dbReference>
<dbReference type="InterPro" id="IPR038834">
    <property type="entry name" value="CCDC175"/>
</dbReference>
<dbReference type="PANTHER" id="PTHR35347">
    <property type="entry name" value="COILED-COIL DOMAIN-CONTAINING PROTEIN 175"/>
    <property type="match status" value="1"/>
</dbReference>
<dbReference type="PANTHER" id="PTHR35347:SF1">
    <property type="entry name" value="COILED-COIL DOMAIN-CONTAINING PROTEIN 175"/>
    <property type="match status" value="1"/>
</dbReference>
<gene>
    <name type="primary">Ccdc175</name>
</gene>
<organism>
    <name type="scientific">Rattus norvegicus</name>
    <name type="common">Rat</name>
    <dbReference type="NCBI Taxonomy" id="10116"/>
    <lineage>
        <taxon>Eukaryota</taxon>
        <taxon>Metazoa</taxon>
        <taxon>Chordata</taxon>
        <taxon>Craniata</taxon>
        <taxon>Vertebrata</taxon>
        <taxon>Euteleostomi</taxon>
        <taxon>Mammalia</taxon>
        <taxon>Eutheria</taxon>
        <taxon>Euarchontoglires</taxon>
        <taxon>Glires</taxon>
        <taxon>Rodentia</taxon>
        <taxon>Myomorpha</taxon>
        <taxon>Muroidea</taxon>
        <taxon>Muridae</taxon>
        <taxon>Murinae</taxon>
        <taxon>Rattus</taxon>
    </lineage>
</organism>
<protein>
    <recommendedName>
        <fullName>Coiled-coil domain-containing protein 175</fullName>
    </recommendedName>
</protein>
<name>CC175_RAT</name>
<sequence length="817" mass="96777">MAMRSWTPDQGFVDRKLVRPASVSTSLSLELCTFPSTLGSSVAANALEQLLVVEKSLQGDYFTCNEEVKTFLKDITVAVKKLEEMRKNTIELLEIESMELSRLYFLLETVPNSMHKELQECILEARRLNILEISQVKGKIEKTNDEIKFLNDKIIELKNMNEALGIKQVELAKQHAKFVLLLNQTLEEKAVATICINDTYTRIKFEKEEIGLQKQCLQDATDLIEKHKQEHRKKKERLAERIKDVKQSCEEKRKEAYNKRKELTRLQNKIIKMKQTVTTNAVMINDKSLEIMRLRETADLWKKKVEDMKRVCESLEEKLLFFLTHKQQIDSVSSEKKSGFISQIQQVAEKLQKINKENKDLRDRLNTLLKQYKITLKEEEAMSLQRQKMAEEHQKQMELLNQKETFLTQRKLDIKNMEEGFSTLRDLNVATKEVYRKQIKLLTENLERELQRWVVNQWRLLCSRKRHSRWLHKTKLTLRKIITEIEIAEEKRRQLLKETKRRQKEISRFVNQIETIKEQLEVEEKEYIKKEKKLMKELNKYEDLIIKEAQINKVKEEQLVETLPRLQIAEDDFQEKSRTLKSLQNDISAKKQEETLLSTYIFRYRKDIIRCTNNTETVKRDMRHIRTLESEKTQSHFEALKNLENEIYVNDQKLALLILENKKLRDYLAYLKKHTKEYSEKQIVTVQNSGDLSWQLIAQHSQYSDLLAEFQIKIKELVDTGEETLQEIRSLASKLRYRDEKIESISAWLLGGIERLHSLMEEESPSSLSKEDLQKAGMKQKEEKTLRFSPSLHTRRDTLSRNCKMIKKRSRSPKNKP</sequence>